<feature type="chain" id="PRO_0000114346" description="Cell division protein FtsZ">
    <location>
        <begin position="1"/>
        <end position="385"/>
    </location>
</feature>
<feature type="binding site" evidence="1">
    <location>
        <begin position="20"/>
        <end position="24"/>
    </location>
    <ligand>
        <name>GTP</name>
        <dbReference type="ChEBI" id="CHEBI:37565"/>
    </ligand>
</feature>
<feature type="binding site" evidence="1">
    <location>
        <begin position="107"/>
        <end position="109"/>
    </location>
    <ligand>
        <name>GTP</name>
        <dbReference type="ChEBI" id="CHEBI:37565"/>
    </ligand>
</feature>
<feature type="binding site" evidence="1">
    <location>
        <position position="138"/>
    </location>
    <ligand>
        <name>GTP</name>
        <dbReference type="ChEBI" id="CHEBI:37565"/>
    </ligand>
</feature>
<feature type="binding site" evidence="1">
    <location>
        <position position="142"/>
    </location>
    <ligand>
        <name>GTP</name>
        <dbReference type="ChEBI" id="CHEBI:37565"/>
    </ligand>
</feature>
<feature type="binding site" evidence="1">
    <location>
        <position position="186"/>
    </location>
    <ligand>
        <name>GTP</name>
        <dbReference type="ChEBI" id="CHEBI:37565"/>
    </ligand>
</feature>
<keyword id="KW-0131">Cell cycle</keyword>
<keyword id="KW-0132">Cell division</keyword>
<keyword id="KW-0963">Cytoplasm</keyword>
<keyword id="KW-0342">GTP-binding</keyword>
<keyword id="KW-0547">Nucleotide-binding</keyword>
<keyword id="KW-1185">Reference proteome</keyword>
<keyword id="KW-0717">Septation</keyword>
<sequence>MFEPVELNNNAIIKVIGIGGGGGNAVEYMVQEHIEGVEFFAINTDAQALRKIEVEQTIQIGSDITKGLGAGANPEIGRRAAEEDSDNLKSILKDADMVFIASGMGGGTGTGAAPIIAKISKKLGILTVAVVTKPFNFEGKKRMISAEQGVSELSKYVDSLIIIPNDKLIKVLSKGISLLDAFNTANNVLKGAVQGIAELITKPGLMNVDFADVRTVMSEMGYAMMGTGIASGDERAKEASKIAISSPLLEDINLSGAKGVLVNITSGLNMKLDEFETIGNTIRSFSSDNATVVIGTSLDTNMNDSLRVTIVATGIGTYNDIKHNNNTENHTSKHVPKNLENLQTKESPKYNNPKQHIYDTFNQQGITNKEMNYLDIPAFLRKKHK</sequence>
<comment type="function">
    <text evidence="1">Essential cell division protein that forms a contractile ring structure (Z ring) at the future cell division site. The regulation of the ring assembly controls the timing and the location of cell division. One of the functions of the FtsZ ring is to recruit other cell division proteins to the septum to produce a new cell wall between the dividing cells. Binds GTP and shows GTPase activity.</text>
</comment>
<comment type="subunit">
    <text evidence="1">Homodimer. Polymerizes to form a dynamic ring structure in a strictly GTP-dependent manner. Interacts directly with several other division proteins.</text>
</comment>
<comment type="subcellular location">
    <subcellularLocation>
        <location evidence="1">Cytoplasm</location>
    </subcellularLocation>
    <text evidence="1">Assembles at midcell at the inner surface of the cytoplasmic membrane.</text>
</comment>
<comment type="similarity">
    <text evidence="1">Belongs to the FtsZ family.</text>
</comment>
<accession>Q89AQ5</accession>
<name>FTSZ_BUCBP</name>
<protein>
    <recommendedName>
        <fullName evidence="1">Cell division protein FtsZ</fullName>
    </recommendedName>
</protein>
<evidence type="ECO:0000255" key="1">
    <source>
        <dbReference type="HAMAP-Rule" id="MF_00909"/>
    </source>
</evidence>
<gene>
    <name evidence="1" type="primary">ftsZ</name>
    <name type="ordered locus">bbp_194</name>
</gene>
<proteinExistence type="inferred from homology"/>
<organism>
    <name type="scientific">Buchnera aphidicola subsp. Baizongia pistaciae (strain Bp)</name>
    <dbReference type="NCBI Taxonomy" id="224915"/>
    <lineage>
        <taxon>Bacteria</taxon>
        <taxon>Pseudomonadati</taxon>
        <taxon>Pseudomonadota</taxon>
        <taxon>Gammaproteobacteria</taxon>
        <taxon>Enterobacterales</taxon>
        <taxon>Erwiniaceae</taxon>
        <taxon>Buchnera</taxon>
    </lineage>
</organism>
<reference key="1">
    <citation type="journal article" date="2003" name="Proc. Natl. Acad. Sci. U.S.A.">
        <title>Reductive genome evolution in Buchnera aphidicola.</title>
        <authorList>
            <person name="van Ham R.C.H.J."/>
            <person name="Kamerbeek J."/>
            <person name="Palacios C."/>
            <person name="Rausell C."/>
            <person name="Abascal F."/>
            <person name="Bastolla U."/>
            <person name="Fernandez J.M."/>
            <person name="Jimenez L."/>
            <person name="Postigo M."/>
            <person name="Silva F.J."/>
            <person name="Tamames J."/>
            <person name="Viguera E."/>
            <person name="Latorre A."/>
            <person name="Valencia A."/>
            <person name="Moran F."/>
            <person name="Moya A."/>
        </authorList>
    </citation>
    <scope>NUCLEOTIDE SEQUENCE [LARGE SCALE GENOMIC DNA]</scope>
    <source>
        <strain>Bp</strain>
    </source>
</reference>
<dbReference type="EMBL" id="AE016826">
    <property type="protein sequence ID" value="AAO26926.1"/>
    <property type="molecule type" value="Genomic_DNA"/>
</dbReference>
<dbReference type="RefSeq" id="WP_011091327.1">
    <property type="nucleotide sequence ID" value="NC_004545.1"/>
</dbReference>
<dbReference type="SMR" id="Q89AQ5"/>
<dbReference type="STRING" id="224915.bbp_194"/>
<dbReference type="KEGG" id="bab:bbp_194"/>
<dbReference type="eggNOG" id="COG0206">
    <property type="taxonomic scope" value="Bacteria"/>
</dbReference>
<dbReference type="HOGENOM" id="CLU_024865_0_1_6"/>
<dbReference type="OrthoDB" id="9813375at2"/>
<dbReference type="Proteomes" id="UP000000601">
    <property type="component" value="Chromosome"/>
</dbReference>
<dbReference type="GO" id="GO:0032153">
    <property type="term" value="C:cell division site"/>
    <property type="evidence" value="ECO:0007669"/>
    <property type="project" value="UniProtKB-UniRule"/>
</dbReference>
<dbReference type="GO" id="GO:0005737">
    <property type="term" value="C:cytoplasm"/>
    <property type="evidence" value="ECO:0007669"/>
    <property type="project" value="UniProtKB-SubCell"/>
</dbReference>
<dbReference type="GO" id="GO:0005525">
    <property type="term" value="F:GTP binding"/>
    <property type="evidence" value="ECO:0007669"/>
    <property type="project" value="UniProtKB-UniRule"/>
</dbReference>
<dbReference type="GO" id="GO:0003924">
    <property type="term" value="F:GTPase activity"/>
    <property type="evidence" value="ECO:0007669"/>
    <property type="project" value="UniProtKB-UniRule"/>
</dbReference>
<dbReference type="GO" id="GO:0000917">
    <property type="term" value="P:division septum assembly"/>
    <property type="evidence" value="ECO:0007669"/>
    <property type="project" value="UniProtKB-KW"/>
</dbReference>
<dbReference type="GO" id="GO:0043093">
    <property type="term" value="P:FtsZ-dependent cytokinesis"/>
    <property type="evidence" value="ECO:0007669"/>
    <property type="project" value="UniProtKB-UniRule"/>
</dbReference>
<dbReference type="GO" id="GO:0051258">
    <property type="term" value="P:protein polymerization"/>
    <property type="evidence" value="ECO:0007669"/>
    <property type="project" value="UniProtKB-UniRule"/>
</dbReference>
<dbReference type="CDD" id="cd02201">
    <property type="entry name" value="FtsZ_type1"/>
    <property type="match status" value="1"/>
</dbReference>
<dbReference type="FunFam" id="3.30.1330.20:FF:000004">
    <property type="entry name" value="Cell division protein FtsZ"/>
    <property type="match status" value="1"/>
</dbReference>
<dbReference type="FunFam" id="3.40.50.1440:FF:000023">
    <property type="entry name" value="Cell division protein FtsZ"/>
    <property type="match status" value="1"/>
</dbReference>
<dbReference type="Gene3D" id="3.30.1330.20">
    <property type="entry name" value="Tubulin/FtsZ, C-terminal domain"/>
    <property type="match status" value="1"/>
</dbReference>
<dbReference type="Gene3D" id="3.40.50.1440">
    <property type="entry name" value="Tubulin/FtsZ, GTPase domain"/>
    <property type="match status" value="1"/>
</dbReference>
<dbReference type="HAMAP" id="MF_00909">
    <property type="entry name" value="FtsZ"/>
    <property type="match status" value="1"/>
</dbReference>
<dbReference type="InterPro" id="IPR000158">
    <property type="entry name" value="Cell_div_FtsZ"/>
</dbReference>
<dbReference type="InterPro" id="IPR020805">
    <property type="entry name" value="Cell_div_FtsZ_CS"/>
</dbReference>
<dbReference type="InterPro" id="IPR045061">
    <property type="entry name" value="FtsZ/CetZ"/>
</dbReference>
<dbReference type="InterPro" id="IPR024757">
    <property type="entry name" value="FtsZ_C"/>
</dbReference>
<dbReference type="InterPro" id="IPR008280">
    <property type="entry name" value="Tub_FtsZ_C"/>
</dbReference>
<dbReference type="InterPro" id="IPR037103">
    <property type="entry name" value="Tubulin/FtsZ-like_C"/>
</dbReference>
<dbReference type="InterPro" id="IPR018316">
    <property type="entry name" value="Tubulin/FtsZ_2-layer-sand-dom"/>
</dbReference>
<dbReference type="InterPro" id="IPR036525">
    <property type="entry name" value="Tubulin/FtsZ_GTPase_sf"/>
</dbReference>
<dbReference type="InterPro" id="IPR003008">
    <property type="entry name" value="Tubulin_FtsZ_GTPase"/>
</dbReference>
<dbReference type="NCBIfam" id="TIGR00065">
    <property type="entry name" value="ftsZ"/>
    <property type="match status" value="1"/>
</dbReference>
<dbReference type="PANTHER" id="PTHR30314">
    <property type="entry name" value="CELL DIVISION PROTEIN FTSZ-RELATED"/>
    <property type="match status" value="1"/>
</dbReference>
<dbReference type="PANTHER" id="PTHR30314:SF3">
    <property type="entry name" value="MITOCHONDRIAL DIVISION PROTEIN FSZA"/>
    <property type="match status" value="1"/>
</dbReference>
<dbReference type="Pfam" id="PF12327">
    <property type="entry name" value="FtsZ_C"/>
    <property type="match status" value="1"/>
</dbReference>
<dbReference type="Pfam" id="PF00091">
    <property type="entry name" value="Tubulin"/>
    <property type="match status" value="1"/>
</dbReference>
<dbReference type="PRINTS" id="PR00423">
    <property type="entry name" value="CELLDVISFTSZ"/>
</dbReference>
<dbReference type="SMART" id="SM00864">
    <property type="entry name" value="Tubulin"/>
    <property type="match status" value="1"/>
</dbReference>
<dbReference type="SMART" id="SM00865">
    <property type="entry name" value="Tubulin_C"/>
    <property type="match status" value="1"/>
</dbReference>
<dbReference type="SUPFAM" id="SSF55307">
    <property type="entry name" value="Tubulin C-terminal domain-like"/>
    <property type="match status" value="1"/>
</dbReference>
<dbReference type="SUPFAM" id="SSF52490">
    <property type="entry name" value="Tubulin nucleotide-binding domain-like"/>
    <property type="match status" value="1"/>
</dbReference>
<dbReference type="PROSITE" id="PS01134">
    <property type="entry name" value="FTSZ_1"/>
    <property type="match status" value="1"/>
</dbReference>
<dbReference type="PROSITE" id="PS01135">
    <property type="entry name" value="FTSZ_2"/>
    <property type="match status" value="1"/>
</dbReference>